<sequence length="487" mass="53144">MSISFNNIPSALRVPLTYIEFDNTKAVSGPPTALHKVLMLGTKLATGSAKAGEAVRVSAYAQAKTLFGRGSQLAEMVKTFKAHNSTLDLWVLPLDEAPSGAKATGSVQITGTATQAGTFSLMIAGNNYKTAVTSGDTADVVAGKLQKLIAADQDVPVVATVAGNTITLTCRFKGETGNEIDLRCNYYSGEAFPEGLKATITDMKNGAVNPDMSVAITGLGAEWWNYIINPFTDTESLNLLRADLVKRWGPLKQIDGICFMAKRGTHAEVTTFAEQRNDYLFSLLATHKAPQPAYLWASAYAAVVAGSLAIDPARPVQTLVMDLLPPSMSDRWDLPERNTLLYSGVSTYTVNAGSQPQVEAAITMYRKNAFGDNDESYLYVETIATLSYLRYAIRSRITQKFPRHKLANDGTRIGPGQAIVTPKIIRNELLALFTELEFAGLVEDFEQFNQTLFVERDSNNPCRVNVLSNENLVNQFRIYAHAIQFIL</sequence>
<proteinExistence type="inferred from homology"/>
<gene>
    <name type="ordered locus">HI_1511</name>
</gene>
<organism>
    <name type="scientific">Haemophilus influenzae (strain ATCC 51907 / DSM 11121 / KW20 / Rd)</name>
    <dbReference type="NCBI Taxonomy" id="71421"/>
    <lineage>
        <taxon>Bacteria</taxon>
        <taxon>Pseudomonadati</taxon>
        <taxon>Pseudomonadota</taxon>
        <taxon>Gammaproteobacteria</taxon>
        <taxon>Pasteurellales</taxon>
        <taxon>Pasteurellaceae</taxon>
        <taxon>Haemophilus</taxon>
    </lineage>
</organism>
<comment type="function">
    <text evidence="1">Major component of the tail.</text>
</comment>
<comment type="similarity">
    <text evidence="2">Belongs to the myoviridae tail sheath protein family.</text>
</comment>
<evidence type="ECO:0000250" key="1"/>
<evidence type="ECO:0000305" key="2"/>
<keyword id="KW-1185">Reference proteome</keyword>
<reference key="1">
    <citation type="journal article" date="1995" name="Science">
        <title>Whole-genome random sequencing and assembly of Haemophilus influenzae Rd.</title>
        <authorList>
            <person name="Fleischmann R.D."/>
            <person name="Adams M.D."/>
            <person name="White O."/>
            <person name="Clayton R.A."/>
            <person name="Kirkness E.F."/>
            <person name="Kerlavage A.R."/>
            <person name="Bult C.J."/>
            <person name="Tomb J.-F."/>
            <person name="Dougherty B.A."/>
            <person name="Merrick J.M."/>
            <person name="McKenney K."/>
            <person name="Sutton G.G."/>
            <person name="FitzHugh W."/>
            <person name="Fields C.A."/>
            <person name="Gocayne J.D."/>
            <person name="Scott J.D."/>
            <person name="Shirley R."/>
            <person name="Liu L.-I."/>
            <person name="Glodek A."/>
            <person name="Kelley J.M."/>
            <person name="Weidman J.F."/>
            <person name="Phillips C.A."/>
            <person name="Spriggs T."/>
            <person name="Hedblom E."/>
            <person name="Cotton M.D."/>
            <person name="Utterback T.R."/>
            <person name="Hanna M.C."/>
            <person name="Nguyen D.T."/>
            <person name="Saudek D.M."/>
            <person name="Brandon R.C."/>
            <person name="Fine L.D."/>
            <person name="Fritchman J.L."/>
            <person name="Fuhrmann J.L."/>
            <person name="Geoghagen N.S.M."/>
            <person name="Gnehm C.L."/>
            <person name="McDonald L.A."/>
            <person name="Small K.V."/>
            <person name="Fraser C.M."/>
            <person name="Smith H.O."/>
            <person name="Venter J.C."/>
        </authorList>
    </citation>
    <scope>NUCLEOTIDE SEQUENCE [LARGE SCALE GENOMIC DNA]</scope>
    <source>
        <strain>ATCC 51907 / DSM 11121 / KW20 / Rd</strain>
    </source>
</reference>
<protein>
    <recommendedName>
        <fullName>Mu-like prophage FluMu tail sheath protein</fullName>
    </recommendedName>
</protein>
<accession>P44233</accession>
<feature type="chain" id="PRO_0000077687" description="Mu-like prophage FluMu tail sheath protein">
    <location>
        <begin position="1"/>
        <end position="487"/>
    </location>
</feature>
<dbReference type="EMBL" id="L42023">
    <property type="protein sequence ID" value="AAC23158.1"/>
    <property type="molecule type" value="Genomic_DNA"/>
</dbReference>
<dbReference type="PIR" id="I64033">
    <property type="entry name" value="I64033"/>
</dbReference>
<dbReference type="RefSeq" id="NP_439661.1">
    <property type="nucleotide sequence ID" value="NC_000907.1"/>
</dbReference>
<dbReference type="SMR" id="P44233"/>
<dbReference type="STRING" id="71421.HI_1511"/>
<dbReference type="DNASU" id="950573"/>
<dbReference type="EnsemblBacteria" id="AAC23158">
    <property type="protein sequence ID" value="AAC23158"/>
    <property type="gene ID" value="HI_1511"/>
</dbReference>
<dbReference type="KEGG" id="hin:HI_1511"/>
<dbReference type="PATRIC" id="fig|71421.8.peg.1581"/>
<dbReference type="eggNOG" id="COG4386">
    <property type="taxonomic scope" value="Bacteria"/>
</dbReference>
<dbReference type="HOGENOM" id="CLU_023068_1_1_6"/>
<dbReference type="OrthoDB" id="5442644at2"/>
<dbReference type="PhylomeDB" id="P44233"/>
<dbReference type="BioCyc" id="HINF71421:G1GJ1-1534-MONOMER"/>
<dbReference type="Proteomes" id="UP000000579">
    <property type="component" value="Chromosome"/>
</dbReference>
<dbReference type="InterPro" id="IPR035326">
    <property type="entry name" value="Phage_sheath-like_beta"/>
</dbReference>
<dbReference type="InterPro" id="IPR035089">
    <property type="entry name" value="Phage_sheath_subtilisin"/>
</dbReference>
<dbReference type="InterPro" id="IPR007067">
    <property type="entry name" value="Tail_sheath"/>
</dbReference>
<dbReference type="InterPro" id="IPR020287">
    <property type="entry name" value="Tail_sheath_C"/>
</dbReference>
<dbReference type="Pfam" id="PF04984">
    <property type="entry name" value="Phage_sheath_1"/>
    <property type="match status" value="1"/>
</dbReference>
<dbReference type="Pfam" id="PF17482">
    <property type="entry name" value="Phage_sheath_1C"/>
    <property type="match status" value="1"/>
</dbReference>
<dbReference type="Pfam" id="PF17481">
    <property type="entry name" value="Phage_sheath_domII"/>
    <property type="match status" value="1"/>
</dbReference>
<dbReference type="PIRSF" id="PIRSF007349">
    <property type="entry name" value="Tsp_L"/>
    <property type="match status" value="1"/>
</dbReference>
<name>VPL_HAEIN</name>